<protein>
    <recommendedName>
        <fullName evidence="1">Probable 4-deoxy-4-formamido-L-arabinose-phosphoundecaprenol deformylase ArnD</fullName>
        <ecNumber evidence="1">3.5.1.n3</ecNumber>
    </recommendedName>
</protein>
<reference key="1">
    <citation type="journal article" date="2001" name="Nature">
        <title>Complete genome sequence of a multiple drug resistant Salmonella enterica serovar Typhi CT18.</title>
        <authorList>
            <person name="Parkhill J."/>
            <person name="Dougan G."/>
            <person name="James K.D."/>
            <person name="Thomson N.R."/>
            <person name="Pickard D."/>
            <person name="Wain J."/>
            <person name="Churcher C.M."/>
            <person name="Mungall K.L."/>
            <person name="Bentley S.D."/>
            <person name="Holden M.T.G."/>
            <person name="Sebaihia M."/>
            <person name="Baker S."/>
            <person name="Basham D."/>
            <person name="Brooks K."/>
            <person name="Chillingworth T."/>
            <person name="Connerton P."/>
            <person name="Cronin A."/>
            <person name="Davis P."/>
            <person name="Davies R.M."/>
            <person name="Dowd L."/>
            <person name="White N."/>
            <person name="Farrar J."/>
            <person name="Feltwell T."/>
            <person name="Hamlin N."/>
            <person name="Haque A."/>
            <person name="Hien T.T."/>
            <person name="Holroyd S."/>
            <person name="Jagels K."/>
            <person name="Krogh A."/>
            <person name="Larsen T.S."/>
            <person name="Leather S."/>
            <person name="Moule S."/>
            <person name="O'Gaora P."/>
            <person name="Parry C."/>
            <person name="Quail M.A."/>
            <person name="Rutherford K.M."/>
            <person name="Simmonds M."/>
            <person name="Skelton J."/>
            <person name="Stevens K."/>
            <person name="Whitehead S."/>
            <person name="Barrell B.G."/>
        </authorList>
    </citation>
    <scope>NUCLEOTIDE SEQUENCE [LARGE SCALE GENOMIC DNA]</scope>
    <source>
        <strain>CT18</strain>
    </source>
</reference>
<reference key="2">
    <citation type="journal article" date="2003" name="J. Bacteriol.">
        <title>Comparative genomics of Salmonella enterica serovar Typhi strains Ty2 and CT18.</title>
        <authorList>
            <person name="Deng W."/>
            <person name="Liou S.-R."/>
            <person name="Plunkett G. III"/>
            <person name="Mayhew G.F."/>
            <person name="Rose D.J."/>
            <person name="Burland V."/>
            <person name="Kodoyianni V."/>
            <person name="Schwartz D.C."/>
            <person name="Blattner F.R."/>
        </authorList>
    </citation>
    <scope>NUCLEOTIDE SEQUENCE [LARGE SCALE GENOMIC DNA]</scope>
    <source>
        <strain>ATCC 700931 / Ty2</strain>
    </source>
</reference>
<comment type="function">
    <text evidence="1">Catalyzes the deformylation of 4-deoxy-4-formamido-L-arabinose-phosphoundecaprenol to 4-amino-4-deoxy-L-arabinose-phosphoundecaprenol. The modified arabinose is attached to lipid A and is required for resistance to polymyxin and cationic antimicrobial peptides.</text>
</comment>
<comment type="catalytic activity">
    <reaction evidence="1">
        <text>4-deoxy-4-formamido-alpha-L-arabinopyranosyl di-trans,octa-cis-undecaprenyl phosphate + H2O = 4-amino-4-deoxy-alpha-L-arabinopyranosyl di-trans,octa-cis-undecaprenyl phosphate + formate</text>
        <dbReference type="Rhea" id="RHEA:27734"/>
        <dbReference type="ChEBI" id="CHEBI:15377"/>
        <dbReference type="ChEBI" id="CHEBI:15740"/>
        <dbReference type="ChEBI" id="CHEBI:58909"/>
        <dbReference type="ChEBI" id="CHEBI:60463"/>
        <dbReference type="EC" id="3.5.1.n3"/>
    </reaction>
</comment>
<comment type="pathway">
    <text evidence="1">Glycolipid biosynthesis; 4-amino-4-deoxy-alpha-L-arabinose undecaprenyl phosphate biosynthesis; 4-amino-4-deoxy-alpha-L-arabinose undecaprenyl phosphate from UDP-4-deoxy-4-formamido-beta-L-arabinose and undecaprenyl phosphate: step 2/2.</text>
</comment>
<comment type="pathway">
    <text evidence="1">Bacterial outer membrane biogenesis; lipopolysaccharide biosynthesis.</text>
</comment>
<comment type="similarity">
    <text evidence="1">Belongs to the polysaccharide deacetylase family. ArnD deformylase subfamily.</text>
</comment>
<feature type="chain" id="PRO_0000383539" description="Probable 4-deoxy-4-formamido-L-arabinose-phosphoundecaprenol deformylase ArnD">
    <location>
        <begin position="1"/>
        <end position="299"/>
    </location>
</feature>
<feature type="domain" description="NodB homology" evidence="1">
    <location>
        <begin position="2"/>
        <end position="260"/>
    </location>
</feature>
<keyword id="KW-0046">Antibiotic resistance</keyword>
<keyword id="KW-0378">Hydrolase</keyword>
<keyword id="KW-0441">Lipid A biosynthesis</keyword>
<keyword id="KW-0444">Lipid biosynthesis</keyword>
<keyword id="KW-0443">Lipid metabolism</keyword>
<keyword id="KW-0448">Lipopolysaccharide biosynthesis</keyword>
<accession>Q8Z539</accession>
<accession>Q7CB85</accession>
<gene>
    <name evidence="1" type="primary">arnD</name>
    <name type="ordered locus">STY2530</name>
    <name type="ordered locus">t0563</name>
</gene>
<evidence type="ECO:0000255" key="1">
    <source>
        <dbReference type="HAMAP-Rule" id="MF_01870"/>
    </source>
</evidence>
<dbReference type="EC" id="3.5.1.n3" evidence="1"/>
<dbReference type="EMBL" id="AE014613">
    <property type="protein sequence ID" value="AAO68269.1"/>
    <property type="molecule type" value="Genomic_DNA"/>
</dbReference>
<dbReference type="EMBL" id="AL513382">
    <property type="protein sequence ID" value="CAD07533.1"/>
    <property type="molecule type" value="Genomic_DNA"/>
</dbReference>
<dbReference type="RefSeq" id="NP_456843.1">
    <property type="nucleotide sequence ID" value="NC_003198.1"/>
</dbReference>
<dbReference type="RefSeq" id="WP_000169759.1">
    <property type="nucleotide sequence ID" value="NZ_WSUR01000039.1"/>
</dbReference>
<dbReference type="SMR" id="Q8Z539"/>
<dbReference type="STRING" id="220341.gene:17586430"/>
<dbReference type="KEGG" id="stt:t0563"/>
<dbReference type="KEGG" id="sty:STY2530"/>
<dbReference type="PATRIC" id="fig|220341.7.peg.2561"/>
<dbReference type="eggNOG" id="COG0726">
    <property type="taxonomic scope" value="Bacteria"/>
</dbReference>
<dbReference type="HOGENOM" id="CLU_084199_0_0_6"/>
<dbReference type="OMA" id="HHGWQAN"/>
<dbReference type="OrthoDB" id="5589314at2"/>
<dbReference type="UniPathway" id="UPA00030"/>
<dbReference type="UniPathway" id="UPA00036">
    <property type="reaction ID" value="UER00496"/>
</dbReference>
<dbReference type="Proteomes" id="UP000000541">
    <property type="component" value="Chromosome"/>
</dbReference>
<dbReference type="Proteomes" id="UP000002670">
    <property type="component" value="Chromosome"/>
</dbReference>
<dbReference type="GO" id="GO:0016020">
    <property type="term" value="C:membrane"/>
    <property type="evidence" value="ECO:0007669"/>
    <property type="project" value="GOC"/>
</dbReference>
<dbReference type="GO" id="GO:0016811">
    <property type="term" value="F:hydrolase activity, acting on carbon-nitrogen (but not peptide) bonds, in linear amides"/>
    <property type="evidence" value="ECO:0007669"/>
    <property type="project" value="UniProtKB-UniRule"/>
</dbReference>
<dbReference type="GO" id="GO:0036108">
    <property type="term" value="P:4-amino-4-deoxy-alpha-L-arabinopyranosyl undecaprenyl phosphate biosynthetic process"/>
    <property type="evidence" value="ECO:0007669"/>
    <property type="project" value="UniProtKB-UniRule"/>
</dbReference>
<dbReference type="GO" id="GO:0009245">
    <property type="term" value="P:lipid A biosynthetic process"/>
    <property type="evidence" value="ECO:0007669"/>
    <property type="project" value="UniProtKB-UniRule"/>
</dbReference>
<dbReference type="GO" id="GO:0009103">
    <property type="term" value="P:lipopolysaccharide biosynthetic process"/>
    <property type="evidence" value="ECO:0007669"/>
    <property type="project" value="UniProtKB-UniRule"/>
</dbReference>
<dbReference type="GO" id="GO:0046677">
    <property type="term" value="P:response to antibiotic"/>
    <property type="evidence" value="ECO:0007669"/>
    <property type="project" value="UniProtKB-KW"/>
</dbReference>
<dbReference type="Gene3D" id="3.20.20.370">
    <property type="entry name" value="Glycoside hydrolase/deacetylase"/>
    <property type="match status" value="1"/>
</dbReference>
<dbReference type="HAMAP" id="MF_01870">
    <property type="entry name" value="ArnD"/>
    <property type="match status" value="1"/>
</dbReference>
<dbReference type="InterPro" id="IPR023557">
    <property type="entry name" value="ArnD"/>
</dbReference>
<dbReference type="InterPro" id="IPR011330">
    <property type="entry name" value="Glyco_hydro/deAcase_b/a-brl"/>
</dbReference>
<dbReference type="InterPro" id="IPR002509">
    <property type="entry name" value="NODB_dom"/>
</dbReference>
<dbReference type="InterPro" id="IPR050248">
    <property type="entry name" value="Polysacc_deacetylase_ArnD"/>
</dbReference>
<dbReference type="NCBIfam" id="NF011923">
    <property type="entry name" value="PRK15394.1"/>
    <property type="match status" value="1"/>
</dbReference>
<dbReference type="PANTHER" id="PTHR10587:SF137">
    <property type="entry name" value="4-DEOXY-4-FORMAMIDO-L-ARABINOSE-PHOSPHOUNDECAPRENOL DEFORMYLASE ARND-RELATED"/>
    <property type="match status" value="1"/>
</dbReference>
<dbReference type="PANTHER" id="PTHR10587">
    <property type="entry name" value="GLYCOSYL TRANSFERASE-RELATED"/>
    <property type="match status" value="1"/>
</dbReference>
<dbReference type="Pfam" id="PF01522">
    <property type="entry name" value="Polysacc_deac_1"/>
    <property type="match status" value="1"/>
</dbReference>
<dbReference type="SUPFAM" id="SSF88713">
    <property type="entry name" value="Glycoside hydrolase/deacetylase"/>
    <property type="match status" value="1"/>
</dbReference>
<dbReference type="PROSITE" id="PS51677">
    <property type="entry name" value="NODB"/>
    <property type="match status" value="1"/>
</dbReference>
<proteinExistence type="inferred from homology"/>
<organism>
    <name type="scientific">Salmonella typhi</name>
    <dbReference type="NCBI Taxonomy" id="90370"/>
    <lineage>
        <taxon>Bacteria</taxon>
        <taxon>Pseudomonadati</taxon>
        <taxon>Pseudomonadota</taxon>
        <taxon>Gammaproteobacteria</taxon>
        <taxon>Enterobacterales</taxon>
        <taxon>Enterobacteriaceae</taxon>
        <taxon>Salmonella</taxon>
    </lineage>
</organism>
<name>ARND_SALTI</name>
<sequence>MTKVGLRIDVDTLRGTREGVPRLLATLHRHGVQASFFFSVGPDNMGRHLWRLIKPRFLWKMLRSNAASLYGWDILLAGTAWPGKNIGNANAGIIRETATYHETGLHAWDHHAWQTHSGHWSIRQLEEDIARGITALEAIIGKPVTCSAAAGWRADGRVVRAKEPFNLRYNSDCRGTTLFRPLLMPGQTGTPQIPVTLPTWDEVIGPAVQAQSFNTWIISRMLQDKGTPVYTIHAEVEGIVHQPLFEDLLVRARDAGITFCPLGELLPASPESLPLGQIVRGHIPGREGWLGCQQAVSAS</sequence>